<sequence>MTMTLLSYLSSLCREATLSAFPQIDTFSPDITQSTKEHFGHYQCNDAMKLARTLKMAPRAIAEAIVNHIPKEIFTSIEIAGAGFINFTFSKEFLNNSLKTFSEELSSGFRVKDPKKVVIDFSSPNIAKDMHVGHLRSTIIGDCLARVFAFVGNDVSRLNHIGDWGTAFGMLITYLQEEPSEDIENLEDLTVLYKKAHARFAEDAEFKKRSQTNVVALQAGDPSALKLWKQICAISERAFQKIYNILDIAIEKRGESFYNPFLPEIIQDLENKNLITISDNAKCVFHEGFSIPLMVQKSDGGYNYATTDLAAMRYRVNNDGADKIIIVTDMGQSLHFQLLEATALAAGYLPNKETFSHVGFGLVLDSEGKKFKTRSGENIKLKELLDTAIDQAKATLKEHRPEISDEEISSRAPILGINAIKYADLSSHRVSDYIFSFEKMLRFEGNTAMFLLYAYVRIQGIKRRLGIETLDLEATPNIQEPSEEALALALLRFPEAIDLTLKDLCPHFLTDYLYMLTNKFNAFFRDCHIEGSSHQKERLYLCALVEKTLAAGMHLLGLQTLDKL</sequence>
<reference key="1">
    <citation type="journal article" date="2003" name="Nucleic Acids Res.">
        <title>Genome sequence of Chlamydophila caviae (Chlamydia psittaci GPIC): examining the role of niche-specific genes in the evolution of the Chlamydiaceae.</title>
        <authorList>
            <person name="Read T.D."/>
            <person name="Myers G.S.A."/>
            <person name="Brunham R.C."/>
            <person name="Nelson W.C."/>
            <person name="Paulsen I.T."/>
            <person name="Heidelberg J.F."/>
            <person name="Holtzapple E.K."/>
            <person name="Khouri H.M."/>
            <person name="Federova N.B."/>
            <person name="Carty H.A."/>
            <person name="Umayam L.A."/>
            <person name="Haft D.H."/>
            <person name="Peterson J.D."/>
            <person name="Beanan M.J."/>
            <person name="White O."/>
            <person name="Salzberg S.L."/>
            <person name="Hsia R.-C."/>
            <person name="McClarty G."/>
            <person name="Rank R.G."/>
            <person name="Bavoil P.M."/>
            <person name="Fraser C.M."/>
        </authorList>
    </citation>
    <scope>NUCLEOTIDE SEQUENCE [LARGE SCALE GENOMIC DNA]</scope>
    <source>
        <strain>ATCC VR-813 / DSM 19441 / 03DC25 / GPIC</strain>
    </source>
</reference>
<dbReference type="EC" id="6.1.1.19" evidence="1"/>
<dbReference type="EMBL" id="AE015925">
    <property type="protein sequence ID" value="AAP04923.1"/>
    <property type="molecule type" value="Genomic_DNA"/>
</dbReference>
<dbReference type="RefSeq" id="WP_011006144.1">
    <property type="nucleotide sequence ID" value="NC_003361.3"/>
</dbReference>
<dbReference type="SMR" id="Q824H4"/>
<dbReference type="STRING" id="227941.CCA_00172"/>
<dbReference type="KEGG" id="cca:CCA_00172"/>
<dbReference type="eggNOG" id="COG0018">
    <property type="taxonomic scope" value="Bacteria"/>
</dbReference>
<dbReference type="HOGENOM" id="CLU_006406_5_1_0"/>
<dbReference type="OrthoDB" id="9805987at2"/>
<dbReference type="Proteomes" id="UP000002193">
    <property type="component" value="Chromosome"/>
</dbReference>
<dbReference type="GO" id="GO:0005737">
    <property type="term" value="C:cytoplasm"/>
    <property type="evidence" value="ECO:0007669"/>
    <property type="project" value="UniProtKB-SubCell"/>
</dbReference>
<dbReference type="GO" id="GO:0004814">
    <property type="term" value="F:arginine-tRNA ligase activity"/>
    <property type="evidence" value="ECO:0007669"/>
    <property type="project" value="UniProtKB-UniRule"/>
</dbReference>
<dbReference type="GO" id="GO:0005524">
    <property type="term" value="F:ATP binding"/>
    <property type="evidence" value="ECO:0007669"/>
    <property type="project" value="UniProtKB-UniRule"/>
</dbReference>
<dbReference type="GO" id="GO:0006420">
    <property type="term" value="P:arginyl-tRNA aminoacylation"/>
    <property type="evidence" value="ECO:0007669"/>
    <property type="project" value="UniProtKB-UniRule"/>
</dbReference>
<dbReference type="CDD" id="cd00671">
    <property type="entry name" value="ArgRS_core"/>
    <property type="match status" value="1"/>
</dbReference>
<dbReference type="FunFam" id="3.40.50.620:FF:000030">
    <property type="entry name" value="Arginine--tRNA ligase"/>
    <property type="match status" value="1"/>
</dbReference>
<dbReference type="FunFam" id="1.10.730.10:FF:000006">
    <property type="entry name" value="Arginyl-tRNA synthetase 2, mitochondrial"/>
    <property type="match status" value="1"/>
</dbReference>
<dbReference type="Gene3D" id="3.30.1360.70">
    <property type="entry name" value="Arginyl tRNA synthetase N-terminal domain"/>
    <property type="match status" value="1"/>
</dbReference>
<dbReference type="Gene3D" id="3.40.50.620">
    <property type="entry name" value="HUPs"/>
    <property type="match status" value="1"/>
</dbReference>
<dbReference type="Gene3D" id="1.10.730.10">
    <property type="entry name" value="Isoleucyl-tRNA Synthetase, Domain 1"/>
    <property type="match status" value="1"/>
</dbReference>
<dbReference type="HAMAP" id="MF_00123">
    <property type="entry name" value="Arg_tRNA_synth"/>
    <property type="match status" value="1"/>
</dbReference>
<dbReference type="InterPro" id="IPR001412">
    <property type="entry name" value="aa-tRNA-synth_I_CS"/>
</dbReference>
<dbReference type="InterPro" id="IPR001278">
    <property type="entry name" value="Arg-tRNA-ligase"/>
</dbReference>
<dbReference type="InterPro" id="IPR005148">
    <property type="entry name" value="Arg-tRNA-synth_N"/>
</dbReference>
<dbReference type="InterPro" id="IPR036695">
    <property type="entry name" value="Arg-tRNA-synth_N_sf"/>
</dbReference>
<dbReference type="InterPro" id="IPR035684">
    <property type="entry name" value="ArgRS_core"/>
</dbReference>
<dbReference type="InterPro" id="IPR008909">
    <property type="entry name" value="DALR_anticod-bd"/>
</dbReference>
<dbReference type="InterPro" id="IPR014729">
    <property type="entry name" value="Rossmann-like_a/b/a_fold"/>
</dbReference>
<dbReference type="InterPro" id="IPR009080">
    <property type="entry name" value="tRNAsynth_Ia_anticodon-bd"/>
</dbReference>
<dbReference type="NCBIfam" id="TIGR00456">
    <property type="entry name" value="argS"/>
    <property type="match status" value="1"/>
</dbReference>
<dbReference type="PANTHER" id="PTHR11956:SF5">
    <property type="entry name" value="ARGININE--TRNA LIGASE, CYTOPLASMIC"/>
    <property type="match status" value="1"/>
</dbReference>
<dbReference type="PANTHER" id="PTHR11956">
    <property type="entry name" value="ARGINYL-TRNA SYNTHETASE"/>
    <property type="match status" value="1"/>
</dbReference>
<dbReference type="Pfam" id="PF03485">
    <property type="entry name" value="Arg_tRNA_synt_N"/>
    <property type="match status" value="1"/>
</dbReference>
<dbReference type="Pfam" id="PF05746">
    <property type="entry name" value="DALR_1"/>
    <property type="match status" value="1"/>
</dbReference>
<dbReference type="Pfam" id="PF00750">
    <property type="entry name" value="tRNA-synt_1d"/>
    <property type="match status" value="1"/>
</dbReference>
<dbReference type="PRINTS" id="PR01038">
    <property type="entry name" value="TRNASYNTHARG"/>
</dbReference>
<dbReference type="SMART" id="SM01016">
    <property type="entry name" value="Arg_tRNA_synt_N"/>
    <property type="match status" value="1"/>
</dbReference>
<dbReference type="SMART" id="SM00836">
    <property type="entry name" value="DALR_1"/>
    <property type="match status" value="1"/>
</dbReference>
<dbReference type="SUPFAM" id="SSF47323">
    <property type="entry name" value="Anticodon-binding domain of a subclass of class I aminoacyl-tRNA synthetases"/>
    <property type="match status" value="1"/>
</dbReference>
<dbReference type="SUPFAM" id="SSF55190">
    <property type="entry name" value="Arginyl-tRNA synthetase (ArgRS), N-terminal 'additional' domain"/>
    <property type="match status" value="1"/>
</dbReference>
<dbReference type="SUPFAM" id="SSF52374">
    <property type="entry name" value="Nucleotidylyl transferase"/>
    <property type="match status" value="1"/>
</dbReference>
<dbReference type="PROSITE" id="PS00178">
    <property type="entry name" value="AA_TRNA_LIGASE_I"/>
    <property type="match status" value="1"/>
</dbReference>
<proteinExistence type="inferred from homology"/>
<accession>Q824H4</accession>
<protein>
    <recommendedName>
        <fullName evidence="1">Arginine--tRNA ligase</fullName>
        <ecNumber evidence="1">6.1.1.19</ecNumber>
    </recommendedName>
    <alternativeName>
        <fullName evidence="1">Arginyl-tRNA synthetase</fullName>
        <shortName evidence="1">ArgRS</shortName>
    </alternativeName>
</protein>
<name>SYR_CHLCV</name>
<organism>
    <name type="scientific">Chlamydia caviae (strain ATCC VR-813 / DSM 19441 / 03DC25 / GPIC)</name>
    <name type="common">Chlamydophila caviae</name>
    <dbReference type="NCBI Taxonomy" id="227941"/>
    <lineage>
        <taxon>Bacteria</taxon>
        <taxon>Pseudomonadati</taxon>
        <taxon>Chlamydiota</taxon>
        <taxon>Chlamydiia</taxon>
        <taxon>Chlamydiales</taxon>
        <taxon>Chlamydiaceae</taxon>
        <taxon>Chlamydia/Chlamydophila group</taxon>
        <taxon>Chlamydia</taxon>
    </lineage>
</organism>
<keyword id="KW-0030">Aminoacyl-tRNA synthetase</keyword>
<keyword id="KW-0067">ATP-binding</keyword>
<keyword id="KW-0963">Cytoplasm</keyword>
<keyword id="KW-0436">Ligase</keyword>
<keyword id="KW-0547">Nucleotide-binding</keyword>
<keyword id="KW-0648">Protein biosynthesis</keyword>
<gene>
    <name evidence="1" type="primary">argS</name>
    <name type="ordered locus">CCA_00172</name>
</gene>
<comment type="catalytic activity">
    <reaction evidence="1">
        <text>tRNA(Arg) + L-arginine + ATP = L-arginyl-tRNA(Arg) + AMP + diphosphate</text>
        <dbReference type="Rhea" id="RHEA:20301"/>
        <dbReference type="Rhea" id="RHEA-COMP:9658"/>
        <dbReference type="Rhea" id="RHEA-COMP:9673"/>
        <dbReference type="ChEBI" id="CHEBI:30616"/>
        <dbReference type="ChEBI" id="CHEBI:32682"/>
        <dbReference type="ChEBI" id="CHEBI:33019"/>
        <dbReference type="ChEBI" id="CHEBI:78442"/>
        <dbReference type="ChEBI" id="CHEBI:78513"/>
        <dbReference type="ChEBI" id="CHEBI:456215"/>
        <dbReference type="EC" id="6.1.1.19"/>
    </reaction>
</comment>
<comment type="subunit">
    <text evidence="1">Monomer.</text>
</comment>
<comment type="subcellular location">
    <subcellularLocation>
        <location evidence="1">Cytoplasm</location>
    </subcellularLocation>
</comment>
<comment type="similarity">
    <text evidence="1">Belongs to the class-I aminoacyl-tRNA synthetase family.</text>
</comment>
<feature type="chain" id="PRO_0000151544" description="Arginine--tRNA ligase">
    <location>
        <begin position="1"/>
        <end position="564"/>
    </location>
</feature>
<feature type="short sequence motif" description="'HIGH' region">
    <location>
        <begin position="124"/>
        <end position="134"/>
    </location>
</feature>
<evidence type="ECO:0000255" key="1">
    <source>
        <dbReference type="HAMAP-Rule" id="MF_00123"/>
    </source>
</evidence>